<keyword id="KW-0963">Cytoplasm</keyword>
<keyword id="KW-0396">Initiation factor</keyword>
<keyword id="KW-0539">Nucleus</keyword>
<keyword id="KW-0648">Protein biosynthesis</keyword>
<keyword id="KW-1185">Reference proteome</keyword>
<reference key="1">
    <citation type="submission" date="2006-10" db="EMBL/GenBank/DDBJ databases">
        <authorList>
            <consortium name="Sanger Xenopus tropicalis EST/cDNA project"/>
        </authorList>
    </citation>
    <scope>NUCLEOTIDE SEQUENCE [LARGE SCALE MRNA]</scope>
    <source>
        <tissue>Egg</tissue>
    </source>
</reference>
<reference key="2">
    <citation type="submission" date="2003-11" db="EMBL/GenBank/DDBJ databases">
        <authorList>
            <consortium name="NIH - Xenopus Gene Collection (XGC) project"/>
        </authorList>
    </citation>
    <scope>NUCLEOTIDE SEQUENCE [LARGE SCALE MRNA]</scope>
    <source>
        <tissue>Embryo</tissue>
    </source>
</reference>
<comment type="function">
    <text evidence="1">Component of the eukaryotic translation initiation factor 3 (eIF-3) complex, which is involved in protein synthesis of a specialized repertoire of mRNAs and, together with other initiation factors, stimulates binding of mRNA and methionyl-tRNAi to the 40S ribosome. The eIF-3 complex specifically targets and initiates translation of a subset of mRNAs involved in cell proliferation.</text>
</comment>
<comment type="subunit">
    <text evidence="1">Component of the eukaryotic translation initiation factor 3 (eIF-3) complex, which is composed of 13 subunits: eif3a, eif3b, eif3c, eif3d, eif3e, eif3f, eif3g, eif3h, eif3i, eif3j, eif3k, eif3l and eif3m.</text>
</comment>
<comment type="subcellular location">
    <subcellularLocation>
        <location evidence="1">Cytoplasm</location>
    </subcellularLocation>
    <subcellularLocation>
        <location evidence="1">Nucleus</location>
    </subcellularLocation>
</comment>
<comment type="similarity">
    <text evidence="1">Belongs to the eIF-3 subunit E family.</text>
</comment>
<comment type="sequence caution" evidence="4">
    <conflict type="erroneous termination">
        <sequence resource="EMBL-CDS" id="CAJ82304"/>
    </conflict>
    <text>Truncated C-terminus.</text>
</comment>
<evidence type="ECO:0000255" key="1">
    <source>
        <dbReference type="HAMAP-Rule" id="MF_03004"/>
    </source>
</evidence>
<evidence type="ECO:0000255" key="2">
    <source>
        <dbReference type="PROSITE-ProRule" id="PRU01185"/>
    </source>
</evidence>
<evidence type="ECO:0000256" key="3">
    <source>
        <dbReference type="SAM" id="MobiDB-lite"/>
    </source>
</evidence>
<evidence type="ECO:0000305" key="4"/>
<accession>Q6P7L9</accession>
<accession>Q28GH4</accession>
<feature type="chain" id="PRO_0000291875" description="Eukaryotic translation initiation factor 3 subunit E">
    <location>
        <begin position="1"/>
        <end position="446"/>
    </location>
</feature>
<feature type="domain" description="PCI" evidence="2">
    <location>
        <begin position="222"/>
        <end position="399"/>
    </location>
</feature>
<feature type="region of interest" description="Disordered" evidence="3">
    <location>
        <begin position="425"/>
        <end position="446"/>
    </location>
</feature>
<name>EIF3E_XENTR</name>
<sequence>MAEYDLTTKIAHFLDRHLVFPLLEFLSVKEIYNEKELFQGKLDLLSDTNMVDFAMDVYKNLYADKEIPHALREKRTTVVAQLKQLQAETEPIVKMFEDPETTRQMQSTRDGRMLFDHLAEKHGFRQEYLDTLYRYAKFQYECGNYSGAAEYLYFFRVLVPSTDRNALSSLWGKLASEILMQNWDAAMEDLTRLKETIDNNTVSSPLQSLQHRTWLIHWSLFVFFNHPKGRDNIIDLFLYQPQYLNAIQTMCPHILRYLTTAVITNKDVRKRRQVLKDLVKVIQQESYTYKDPITEFVECLYVNFDFDGAQKKLRECESVLVNDFFLVACLEDFIENARLFIFETFCRIHQCISISMLADKLNMTPEEAERWIVNLIRNARLDAKIDSKLGHVVMGNNAVSPYQQVIEKTKSLAFRSQMLAMNIEKKTNQNSRTEAPTWAAQDSGFY</sequence>
<proteinExistence type="evidence at transcript level"/>
<protein>
    <recommendedName>
        <fullName evidence="1">Eukaryotic translation initiation factor 3 subunit E</fullName>
        <shortName evidence="1">eIF3e</shortName>
    </recommendedName>
    <alternativeName>
        <fullName evidence="1">Eukaryotic translation initiation factor 3 subunit 6</fullName>
    </alternativeName>
</protein>
<organism>
    <name type="scientific">Xenopus tropicalis</name>
    <name type="common">Western clawed frog</name>
    <name type="synonym">Silurana tropicalis</name>
    <dbReference type="NCBI Taxonomy" id="8364"/>
    <lineage>
        <taxon>Eukaryota</taxon>
        <taxon>Metazoa</taxon>
        <taxon>Chordata</taxon>
        <taxon>Craniata</taxon>
        <taxon>Vertebrata</taxon>
        <taxon>Euteleostomi</taxon>
        <taxon>Amphibia</taxon>
        <taxon>Batrachia</taxon>
        <taxon>Anura</taxon>
        <taxon>Pipoidea</taxon>
        <taxon>Pipidae</taxon>
        <taxon>Xenopodinae</taxon>
        <taxon>Xenopus</taxon>
        <taxon>Silurana</taxon>
    </lineage>
</organism>
<dbReference type="EMBL" id="CR761387">
    <property type="protein sequence ID" value="CAJ82304.1"/>
    <property type="status" value="ALT_SEQ"/>
    <property type="molecule type" value="mRNA"/>
</dbReference>
<dbReference type="EMBL" id="BC061611">
    <property type="protein sequence ID" value="AAH61611.1"/>
    <property type="molecule type" value="mRNA"/>
</dbReference>
<dbReference type="EMBL" id="BC080327">
    <property type="protein sequence ID" value="AAH80327.1"/>
    <property type="molecule type" value="mRNA"/>
</dbReference>
<dbReference type="RefSeq" id="NP_989147.1">
    <property type="nucleotide sequence ID" value="NM_203816.1"/>
</dbReference>
<dbReference type="SMR" id="Q6P7L9"/>
<dbReference type="FunCoup" id="Q6P7L9">
    <property type="interactions" value="3462"/>
</dbReference>
<dbReference type="STRING" id="8364.ENSXETP00000002550"/>
<dbReference type="PaxDb" id="8364-ENSXETP00000062123"/>
<dbReference type="DNASU" id="394752"/>
<dbReference type="GeneID" id="394752"/>
<dbReference type="KEGG" id="xtr:394752"/>
<dbReference type="AGR" id="Xenbase:XB-GENE-946246"/>
<dbReference type="CTD" id="3646"/>
<dbReference type="Xenbase" id="XB-GENE-946246">
    <property type="gene designation" value="eif3e"/>
</dbReference>
<dbReference type="eggNOG" id="KOG2758">
    <property type="taxonomic scope" value="Eukaryota"/>
</dbReference>
<dbReference type="InParanoid" id="Q6P7L9"/>
<dbReference type="OMA" id="NCPWILR"/>
<dbReference type="OrthoDB" id="417252at2759"/>
<dbReference type="Reactome" id="R-XTR-156827">
    <property type="pathway name" value="L13a-mediated translational silencing of Ceruloplasmin expression"/>
</dbReference>
<dbReference type="Reactome" id="R-XTR-72689">
    <property type="pathway name" value="Formation of a pool of free 40S subunits"/>
</dbReference>
<dbReference type="Reactome" id="R-XTR-72695">
    <property type="pathway name" value="Formation of the ternary complex, and subsequently, the 43S complex"/>
</dbReference>
<dbReference type="Reactome" id="R-XTR-72702">
    <property type="pathway name" value="Ribosomal scanning and start codon recognition"/>
</dbReference>
<dbReference type="Proteomes" id="UP000008143">
    <property type="component" value="Chromosome 6"/>
</dbReference>
<dbReference type="ExpressionAtlas" id="Q6P7L9">
    <property type="expression patterns" value="baseline"/>
</dbReference>
<dbReference type="GO" id="GO:0016282">
    <property type="term" value="C:eukaryotic 43S preinitiation complex"/>
    <property type="evidence" value="ECO:0007669"/>
    <property type="project" value="UniProtKB-UniRule"/>
</dbReference>
<dbReference type="GO" id="GO:0033290">
    <property type="term" value="C:eukaryotic 48S preinitiation complex"/>
    <property type="evidence" value="ECO:0007669"/>
    <property type="project" value="UniProtKB-UniRule"/>
</dbReference>
<dbReference type="GO" id="GO:0005852">
    <property type="term" value="C:eukaryotic translation initiation factor 3 complex"/>
    <property type="evidence" value="ECO:0000250"/>
    <property type="project" value="UniProtKB"/>
</dbReference>
<dbReference type="GO" id="GO:0071540">
    <property type="term" value="C:eukaryotic translation initiation factor 3 complex, eIF3e"/>
    <property type="evidence" value="ECO:0007669"/>
    <property type="project" value="UniProtKB-UniRule"/>
</dbReference>
<dbReference type="GO" id="GO:0005634">
    <property type="term" value="C:nucleus"/>
    <property type="evidence" value="ECO:0007669"/>
    <property type="project" value="UniProtKB-SubCell"/>
</dbReference>
<dbReference type="GO" id="GO:0003743">
    <property type="term" value="F:translation initiation factor activity"/>
    <property type="evidence" value="ECO:0007669"/>
    <property type="project" value="UniProtKB-UniRule"/>
</dbReference>
<dbReference type="GO" id="GO:0001732">
    <property type="term" value="P:formation of cytoplasmic translation initiation complex"/>
    <property type="evidence" value="ECO:0007669"/>
    <property type="project" value="UniProtKB-UniRule"/>
</dbReference>
<dbReference type="GO" id="GO:0006413">
    <property type="term" value="P:translational initiation"/>
    <property type="evidence" value="ECO:0000250"/>
    <property type="project" value="UniProtKB"/>
</dbReference>
<dbReference type="CDD" id="cd21378">
    <property type="entry name" value="eIF3E"/>
    <property type="match status" value="1"/>
</dbReference>
<dbReference type="HAMAP" id="MF_03004">
    <property type="entry name" value="eIF3e"/>
    <property type="match status" value="1"/>
</dbReference>
<dbReference type="InterPro" id="IPR016650">
    <property type="entry name" value="eIF3e"/>
</dbReference>
<dbReference type="InterPro" id="IPR019010">
    <property type="entry name" value="eIF3e_N"/>
</dbReference>
<dbReference type="InterPro" id="IPR000717">
    <property type="entry name" value="PCI_dom"/>
</dbReference>
<dbReference type="InterPro" id="IPR036390">
    <property type="entry name" value="WH_DNA-bd_sf"/>
</dbReference>
<dbReference type="PANTHER" id="PTHR10317">
    <property type="entry name" value="EUKARYOTIC TRANSLATION INITIATION FACTOR 3 SUBUNIT E"/>
    <property type="match status" value="1"/>
</dbReference>
<dbReference type="Pfam" id="PF09440">
    <property type="entry name" value="eIF3_N"/>
    <property type="match status" value="1"/>
</dbReference>
<dbReference type="Pfam" id="PF21357">
    <property type="entry name" value="EIF3E_C"/>
    <property type="match status" value="1"/>
</dbReference>
<dbReference type="Pfam" id="PF01399">
    <property type="entry name" value="PCI"/>
    <property type="match status" value="1"/>
</dbReference>
<dbReference type="PIRSF" id="PIRSF016255">
    <property type="entry name" value="eIF3e_su6"/>
    <property type="match status" value="1"/>
</dbReference>
<dbReference type="SMART" id="SM01186">
    <property type="entry name" value="eIF3_N"/>
    <property type="match status" value="1"/>
</dbReference>
<dbReference type="SMART" id="SM00088">
    <property type="entry name" value="PINT"/>
    <property type="match status" value="1"/>
</dbReference>
<dbReference type="SUPFAM" id="SSF46785">
    <property type="entry name" value="Winged helix' DNA-binding domain"/>
    <property type="match status" value="1"/>
</dbReference>
<dbReference type="PROSITE" id="PS50250">
    <property type="entry name" value="PCI"/>
    <property type="match status" value="1"/>
</dbReference>
<gene>
    <name type="primary">eif3e</name>
    <name type="synonym">eif3s6</name>
    <name type="ORF">TEgg051e17.1</name>
</gene>